<organismHost>
    <name type="scientific">Acidianus convivator</name>
    <dbReference type="NCBI Taxonomy" id="269667"/>
</organismHost>
<feature type="chain" id="PRO_0000389053" description="Protein ORF1940">
    <location>
        <begin position="1"/>
        <end position="1940"/>
    </location>
</feature>
<feature type="repeat" description="TPR 1">
    <location>
        <begin position="119"/>
        <end position="153"/>
    </location>
</feature>
<feature type="repeat" description="TPR 2">
    <location>
        <begin position="155"/>
        <end position="186"/>
    </location>
</feature>
<feature type="repeat" description="TPR 3">
    <location>
        <begin position="480"/>
        <end position="513"/>
    </location>
</feature>
<feature type="repeat" description="TPR 4">
    <location>
        <begin position="617"/>
        <end position="652"/>
    </location>
</feature>
<feature type="repeat" description="TPR 5">
    <location>
        <begin position="1691"/>
        <end position="1724"/>
    </location>
</feature>
<feature type="region of interest" description="Disordered" evidence="1">
    <location>
        <begin position="1160"/>
        <end position="1239"/>
    </location>
</feature>
<feature type="region of interest" description="Disordered" evidence="1">
    <location>
        <begin position="1519"/>
        <end position="1571"/>
    </location>
</feature>
<feature type="region of interest" description="Disordered" evidence="1">
    <location>
        <begin position="1862"/>
        <end position="1940"/>
    </location>
</feature>
<feature type="compositionally biased region" description="Low complexity" evidence="1">
    <location>
        <begin position="1164"/>
        <end position="1185"/>
    </location>
</feature>
<feature type="compositionally biased region" description="Polar residues" evidence="1">
    <location>
        <begin position="1186"/>
        <end position="1200"/>
    </location>
</feature>
<feature type="compositionally biased region" description="Low complexity" evidence="1">
    <location>
        <begin position="1201"/>
        <end position="1235"/>
    </location>
</feature>
<feature type="compositionally biased region" description="Low complexity" evidence="1">
    <location>
        <begin position="1521"/>
        <end position="1539"/>
    </location>
</feature>
<feature type="compositionally biased region" description="Low complexity" evidence="1">
    <location>
        <begin position="1561"/>
        <end position="1571"/>
    </location>
</feature>
<feature type="compositionally biased region" description="Pro residues" evidence="1">
    <location>
        <begin position="1868"/>
        <end position="1883"/>
    </location>
</feature>
<feature type="compositionally biased region" description="Low complexity" evidence="1">
    <location>
        <begin position="1884"/>
        <end position="1894"/>
    </location>
</feature>
<feature type="compositionally biased region" description="Pro residues" evidence="1">
    <location>
        <begin position="1895"/>
        <end position="1912"/>
    </location>
</feature>
<evidence type="ECO:0000256" key="1">
    <source>
        <dbReference type="SAM" id="MobiDB-lite"/>
    </source>
</evidence>
<protein>
    <recommendedName>
        <fullName>Protein ORF1940</fullName>
    </recommendedName>
</protein>
<reference key="1">
    <citation type="journal article" date="2005" name="Nature">
        <title>Virology: independent virus development outside a host.</title>
        <authorList>
            <person name="Haring M."/>
            <person name="Vestergaard G."/>
            <person name="Rachel R."/>
            <person name="Chen L."/>
            <person name="Garrett R.A."/>
            <person name="Prangishvili D."/>
        </authorList>
    </citation>
    <scope>NUCLEOTIDE SEQUENCE [GENOMIC DNA]</scope>
</reference>
<sequence>MSSNYALPDVFRAMAVLTGALAKAYSVLPNDSSKTSNASDVAEASLDVARAFEEASQILKTAVSSPVVARALSETQNNGTLHDQLNSSVQNIAKASTEFSAMGDIFKYQAKAQVSLAQIKACSNAQCSPETVESNFQEAIRDYEAASSIALQYGFQSLAEQLSDAVNQLKTALSNYEKTVATLQQIKQAQASGNYWQVLNLALSLASNQQNTQSSKNIAQAANNLKSALNAPLNSNNMSQYYSNVVSAIQSFPRCTQVSTLVTTTSAVIAIQRLLQLGSSELQKAQQATQALLQSAEQMWSSAYNHAEKAYEAFSLAEQLASQFVSQELANEIEKGLEKVKQFVAEAQANMNANKNILADAFNTVVDNISNAVNDLMNWVNDLIETHIPGIVGQILAGVVDGLIFVVISLIPGVGQIIDGIIAFSFISNLVEQGIIAVKTGYGAQFLQQLEESFLQPQNIAMIATSVIGGIGLERVLADRLPDIRIGAIDAAKEKIGDLMSDFKEKISIGLHGISDDASKVLDDIKTKIKGNAVSLRDVGSTIVEKKIEVKAPDITKIDVKPEEITAKNVNVKLVKPLSTDLAKQLSEKFKSVKNLKDLKAIVKVDKEFRIPYDLQGKSMGDKTVLTADYMEGEVLGLIKNYEADVKISPTSFEKTIKGAELKPPELHAKLSSFDYTGKGILDVEQDIIDAIKTSKDISLTSDGKGVAITTDKATTIVPVKKYFDAIMTGYAKGDFSDVKVAELLSKVNSSDLARLMTDDIIKKLKDYKGSGELKIGDLVIAKEIKGDKTLYSVAKIGPDGKPQSINVVSDIDDPMFRATVYNNLLDMVKNKTEFDYLVTNLNKMKSLSPDLQTTLDRLTVKPGERSISIEGSGGKYLNVTEKSLPGGSEIRAETNLEGVKAVDALEKELDGERQATLEQLLESYKNGGFRDVKALADALGKIDKLPDTLKEALAKYFDRKMENSSLEEEVDLIKGLPKMYEDLKTKVIDPVDTFLNKLKAKGAPESEIDALRQLFYKRVLNEINAGRSLDTIDLASAFVKANEVLDKVDDVVKDLKDRGLPDNLVNDIKASMFKQIEKDVLSGKPLDINRIEFDVLRQKEDAIFNFVLDKFGFDKNLLKNLTPDQLDRFKTNVVDQFLLKHITDKNDLMDEYNNIVKGPSKVQNTTQPSATQNTTTQPTAQNTSLPGATQNTTLPTPSKVQNTTQPSTTPNTTLSTPSTTPNTTTQPTVQNTSLPGAVQNITPKDLQSIVKDPKVLDEINATVEKLKDLGLPDKLVDDIKASIFKKIENDALSGKPIDINNIWTNILMQKEDAIFNFVLDKFGFDKNLLKNLTPEQLAKFKTDVVTDFMTNRIVDKTDLMQTYMDVKATVKGPGTTQNTTTPSVAQNITLKDLQSIVKDPKVLEQVDATIKRLKDLGLPDKLVDDIKASMLEQIKKDALSGKPIDINNIWTNILMQKEDAIFDFVLDKFGFDKDLLKNLTPEQLAKFKTDVVTDFMTNRIVDKTDLMQTYMDAKTLVKGPSTTQNTTQPSTTPNMTPPKIEFKDQNVKPPGTGAGTDVNTPGSGSQTVTSGSGLQLLVKPKEIAAQEEKIKLKDLQSILPEETLERFEKLPDSLKEKVIDEIETRLRGKKVDEIEGIVNDVIDKYEKLYDSAVKDGMLNDLKNLIDAYSKKDNNATEVLTDVGKSLEVLKDLNKSVGTSVVEEAKYNSTLQTYLAGLGIKDLNNVSDKQLIKIGTDVTNTLSEKFGTPVVVLTPEEAKILVKELNDTLNDTGLNTKFKIEEVKPLPKTLEVILATLGIKNETKQRILLKELQKKLPKIRITDLIVISSKGTITPITWDDIMPTYYTNVQGQTLPIYTTQTTTTHHITPPPPPPPPPPPPPPKTQTITTTTQITPPSPPPTPPPPPPPPKSPKMPASLSPSSGNAPSEAEAEQAEQVLLI</sequence>
<dbReference type="EMBL" id="AJ888457">
    <property type="protein sequence ID" value="CAI59868.1"/>
    <property type="molecule type" value="Genomic_DNA"/>
</dbReference>
<dbReference type="RefSeq" id="YP_319881.1">
    <property type="nucleotide sequence ID" value="NC_007409.1"/>
</dbReference>
<dbReference type="SMR" id="Q3V4U6"/>
<dbReference type="GeneID" id="4484243"/>
<dbReference type="KEGG" id="vg:4484243"/>
<dbReference type="Proteomes" id="UP000002150">
    <property type="component" value="Genome"/>
</dbReference>
<dbReference type="InterPro" id="IPR051144">
    <property type="entry name" value="Formin_homology_domain"/>
</dbReference>
<dbReference type="PANTHER" id="PTHR45733">
    <property type="entry name" value="FORMIN-J"/>
    <property type="match status" value="1"/>
</dbReference>
<dbReference type="PANTHER" id="PTHR45733:SF8">
    <property type="entry name" value="FORMIN-J"/>
    <property type="match status" value="1"/>
</dbReference>
<proteinExistence type="predicted"/>
<accession>Q3V4U6</accession>
<organism>
    <name type="scientific">Acidianus two-tailed virus</name>
    <name type="common">ATV</name>
    <dbReference type="NCBI Taxonomy" id="315953"/>
    <lineage>
        <taxon>Viruses</taxon>
        <taxon>Viruses incertae sedis</taxon>
        <taxon>Bicaudaviridae</taxon>
        <taxon>Bicaudavirus</taxon>
    </lineage>
</organism>
<name>Y1940_ATV</name>
<keyword id="KW-1185">Reference proteome</keyword>
<keyword id="KW-0677">Repeat</keyword>
<keyword id="KW-0802">TPR repeat</keyword>